<feature type="peptide" id="PRO_0000043873" description="Galanin">
    <location>
        <begin position="1"/>
        <end position="29"/>
    </location>
</feature>
<feature type="modified residue" description="Threonine amide" evidence="1">
    <location>
        <position position="29"/>
    </location>
</feature>
<organism>
    <name type="scientific">Gallus gallus</name>
    <name type="common">Chicken</name>
    <dbReference type="NCBI Taxonomy" id="9031"/>
    <lineage>
        <taxon>Eukaryota</taxon>
        <taxon>Metazoa</taxon>
        <taxon>Chordata</taxon>
        <taxon>Craniata</taxon>
        <taxon>Vertebrata</taxon>
        <taxon>Euteleostomi</taxon>
        <taxon>Archelosauria</taxon>
        <taxon>Archosauria</taxon>
        <taxon>Dinosauria</taxon>
        <taxon>Saurischia</taxon>
        <taxon>Theropoda</taxon>
        <taxon>Coelurosauria</taxon>
        <taxon>Aves</taxon>
        <taxon>Neognathae</taxon>
        <taxon>Galloanserae</taxon>
        <taxon>Galliformes</taxon>
        <taxon>Phasianidae</taxon>
        <taxon>Phasianinae</taxon>
        <taxon>Gallus</taxon>
    </lineage>
</organism>
<comment type="function">
    <text>Contracts smooth muscle of the gastrointestinal and genitourinary tract, regulates growth hormone release, modulates insulin release, and may be involved in the control of adrenal secretion.</text>
</comment>
<comment type="subcellular location">
    <subcellularLocation>
        <location>Secreted</location>
    </subcellularLocation>
</comment>
<comment type="similarity">
    <text evidence="2">Belongs to the galanin family.</text>
</comment>
<keyword id="KW-0027">Amidation</keyword>
<keyword id="KW-0903">Direct protein sequencing</keyword>
<keyword id="KW-0372">Hormone</keyword>
<keyword id="KW-0527">Neuropeptide</keyword>
<keyword id="KW-1185">Reference proteome</keyword>
<keyword id="KW-0964">Secreted</keyword>
<evidence type="ECO:0000269" key="1">
    <source>
    </source>
</evidence>
<evidence type="ECO:0000305" key="2"/>
<proteinExistence type="evidence at protein level"/>
<dbReference type="PIR" id="S17147">
    <property type="entry name" value="S17147"/>
</dbReference>
<dbReference type="FunCoup" id="P30802">
    <property type="interactions" value="7"/>
</dbReference>
<dbReference type="HOGENOM" id="CLU_166244_0_0_1"/>
<dbReference type="InParanoid" id="P30802"/>
<dbReference type="OrthoDB" id="8721537at2759"/>
<dbReference type="Proteomes" id="UP000000539">
    <property type="component" value="Unassembled WGS sequence"/>
</dbReference>
<dbReference type="GO" id="GO:0005576">
    <property type="term" value="C:extracellular region"/>
    <property type="evidence" value="ECO:0007669"/>
    <property type="project" value="UniProtKB-SubCell"/>
</dbReference>
<dbReference type="GO" id="GO:0005179">
    <property type="term" value="F:hormone activity"/>
    <property type="evidence" value="ECO:0007669"/>
    <property type="project" value="UniProtKB-KW"/>
</dbReference>
<dbReference type="GO" id="GO:0007218">
    <property type="term" value="P:neuropeptide signaling pathway"/>
    <property type="evidence" value="ECO:0007669"/>
    <property type="project" value="UniProtKB-KW"/>
</dbReference>
<dbReference type="InterPro" id="IPR008174">
    <property type="entry name" value="Galanin"/>
</dbReference>
<dbReference type="InterPro" id="IPR008175">
    <property type="entry name" value="Galanin_pre"/>
</dbReference>
<dbReference type="PANTHER" id="PTHR16839">
    <property type="entry name" value="GALANIN"/>
    <property type="match status" value="1"/>
</dbReference>
<dbReference type="PANTHER" id="PTHR16839:SF1">
    <property type="entry name" value="GALANIN PEPTIDES"/>
    <property type="match status" value="1"/>
</dbReference>
<dbReference type="Pfam" id="PF01296">
    <property type="entry name" value="Galanin"/>
    <property type="match status" value="1"/>
</dbReference>
<dbReference type="PRINTS" id="PR00273">
    <property type="entry name" value="GALANIN"/>
</dbReference>
<dbReference type="PROSITE" id="PS00861">
    <property type="entry name" value="GALANIN"/>
    <property type="match status" value="1"/>
</dbReference>
<name>GALA_CHICK</name>
<accession>P30802</accession>
<gene>
    <name type="primary">GAL</name>
    <name type="synonym">GALN</name>
</gene>
<sequence length="29" mass="3212">GWTLNSAGYLLGPHAVDNHRSFNDKHGFT</sequence>
<protein>
    <recommendedName>
        <fullName>Galanin</fullName>
    </recommendedName>
</protein>
<reference key="1">
    <citation type="journal article" date="1991" name="FEBS Lett.">
        <title>Chemical detection of natural peptides by specific structures. Isolation of chicken galanin by monitoring for its N-terminal dipeptide, and determination of the amino acid sequence.</title>
        <authorList>
            <person name="Norberg A."/>
            <person name="Sillard R."/>
            <person name="Carlquist M."/>
            <person name="Joernvall H."/>
            <person name="Mutt V."/>
        </authorList>
    </citation>
    <scope>PROTEIN SEQUENCE</scope>
    <scope>AMIDATION AT THR-29</scope>
    <source>
        <tissue>Intestine</tissue>
    </source>
</reference>